<gene>
    <name type="primary">hom</name>
    <name type="synonym">thrA</name>
    <name type="ordered locus">Rv1294</name>
    <name type="ORF">MTCY373.14</name>
</gene>
<proteinExistence type="evidence at protein level"/>
<sequence length="441" mass="45553">MPGDEKPVGVAVLGLGNVGSEVVRIIENSAEDLAARVGAPLVLRGIGVRRVTTDRGVPIELLTDDIEELVAREDVDIVVEVMGPVEPSRKAILGALERGKSVVTANKALLATSTGELAQAAESAHVDLYFEAAVAGAIPVIRPLTQSLAGDTVLRVAGIVNGTTNYILSAMDSTGADYASALADASALGYAEADPTADVEGYDAAAKAAILASIAFHTRVTADDVYREGITKVTPADFGSAHALGCTIKLLSICERITTDEGSQRVSARVYPALVPLSHPLAAVNGAFNAVVVEAEAAGRLMFYGQGAGGAPTASAVTGDLVMAARNRVLGSRGPRESKYAQLPVAPMGFIETRYYVSMNVADKPGVLSAVAAEFAKREVSIAEVRQEGVVDEGGRRVGARIVVVTHLATDAALSETVDALDDLDVVQGVSSVIRLEGTGL</sequence>
<feature type="chain" id="PRO_0000066702" description="Homoserine dehydrogenase">
    <location>
        <begin position="1"/>
        <end position="441"/>
    </location>
</feature>
<feature type="domain" description="ACT" evidence="5">
    <location>
        <begin position="356"/>
        <end position="435"/>
    </location>
</feature>
<feature type="active site" description="Proton donor" evidence="4">
    <location>
        <position position="207"/>
    </location>
</feature>
<feature type="binding site" evidence="1">
    <location>
        <position position="17"/>
    </location>
    <ligand>
        <name>NADP(+)</name>
        <dbReference type="ChEBI" id="CHEBI:58349"/>
    </ligand>
</feature>
<feature type="binding site" evidence="3">
    <location>
        <position position="18"/>
    </location>
    <ligand>
        <name>NAD(+)</name>
        <dbReference type="ChEBI" id="CHEBI:57540"/>
    </ligand>
</feature>
<feature type="binding site" evidence="1">
    <location>
        <position position="18"/>
    </location>
    <ligand>
        <name>NADP(+)</name>
        <dbReference type="ChEBI" id="CHEBI:58349"/>
    </ligand>
</feature>
<feature type="binding site" evidence="2">
    <location>
        <position position="18"/>
    </location>
    <ligand>
        <name>NADPH</name>
        <dbReference type="ChEBI" id="CHEBI:57783"/>
    </ligand>
</feature>
<feature type="binding site" evidence="3">
    <location>
        <position position="37"/>
    </location>
    <ligand>
        <name>NAD(+)</name>
        <dbReference type="ChEBI" id="CHEBI:57540"/>
    </ligand>
</feature>
<feature type="binding site" evidence="3">
    <location>
        <position position="47"/>
    </location>
    <ligand>
        <name>NAD(+)</name>
        <dbReference type="ChEBI" id="CHEBI:57540"/>
    </ligand>
</feature>
<feature type="binding site" evidence="1">
    <location>
        <position position="49"/>
    </location>
    <ligand>
        <name>NADP(+)</name>
        <dbReference type="ChEBI" id="CHEBI:58349"/>
    </ligand>
</feature>
<feature type="binding site" evidence="2">
    <location>
        <position position="49"/>
    </location>
    <ligand>
        <name>NADPH</name>
        <dbReference type="ChEBI" id="CHEBI:57783"/>
    </ligand>
</feature>
<feature type="binding site" evidence="1">
    <location>
        <position position="50"/>
    </location>
    <ligand>
        <name>NADP(+)</name>
        <dbReference type="ChEBI" id="CHEBI:58349"/>
    </ligand>
</feature>
<feature type="binding site" evidence="1">
    <location>
        <position position="107"/>
    </location>
    <ligand>
        <name>NADP(+)</name>
        <dbReference type="ChEBI" id="CHEBI:58349"/>
    </ligand>
</feature>
<feature type="binding site" evidence="2">
    <location>
        <position position="107"/>
    </location>
    <ligand>
        <name>NADPH</name>
        <dbReference type="ChEBI" id="CHEBI:57783"/>
    </ligand>
</feature>
<feature type="binding site" evidence="3">
    <location>
        <position position="131"/>
    </location>
    <ligand>
        <name>Na(+)</name>
        <dbReference type="ChEBI" id="CHEBI:29101"/>
    </ligand>
</feature>
<feature type="binding site" evidence="3">
    <location>
        <position position="134"/>
    </location>
    <ligand>
        <name>Na(+)</name>
        <dbReference type="ChEBI" id="CHEBI:29101"/>
    </ligand>
</feature>
<feature type="binding site" evidence="3">
    <location>
        <position position="136"/>
    </location>
    <ligand>
        <name>Na(+)</name>
        <dbReference type="ChEBI" id="CHEBI:29101"/>
    </ligand>
</feature>
<feature type="binding site" evidence="3">
    <location>
        <position position="138"/>
    </location>
    <ligand>
        <name>Na(+)</name>
        <dbReference type="ChEBI" id="CHEBI:29101"/>
    </ligand>
</feature>
<feature type="binding site" evidence="1">
    <location>
        <position position="189"/>
    </location>
    <ligand>
        <name>NADP(+)</name>
        <dbReference type="ChEBI" id="CHEBI:58349"/>
    </ligand>
</feature>
<feature type="binding site" evidence="3">
    <location>
        <position position="192"/>
    </location>
    <ligand>
        <name>L-homoserine</name>
        <dbReference type="ChEBI" id="CHEBI:57476"/>
    </ligand>
</feature>
<feature type="binding site" evidence="1">
    <location>
        <position position="192"/>
    </location>
    <ligand>
        <name>NADP(+)</name>
        <dbReference type="ChEBI" id="CHEBI:58349"/>
    </ligand>
</feature>
<feature type="binding site" evidence="3">
    <location>
        <position position="203"/>
    </location>
    <ligand>
        <name>L-homoserine</name>
        <dbReference type="ChEBI" id="CHEBI:57476"/>
    </ligand>
</feature>
<feature type="binding site" evidence="3">
    <location>
        <position position="309"/>
    </location>
    <ligand>
        <name>NAD(+)</name>
        <dbReference type="ChEBI" id="CHEBI:57540"/>
    </ligand>
</feature>
<feature type="binding site" evidence="1">
    <location>
        <position position="309"/>
    </location>
    <ligand>
        <name>NADP(+)</name>
        <dbReference type="ChEBI" id="CHEBI:58349"/>
    </ligand>
</feature>
<feature type="binding site" evidence="2">
    <location>
        <position position="309"/>
    </location>
    <ligand>
        <name>NADPH</name>
        <dbReference type="ChEBI" id="CHEBI:57783"/>
    </ligand>
</feature>
<evidence type="ECO:0000250" key="1">
    <source>
        <dbReference type="UniProtKB" id="F9VNG5"/>
    </source>
</evidence>
<evidence type="ECO:0000250" key="2">
    <source>
        <dbReference type="UniProtKB" id="O58802"/>
    </source>
</evidence>
<evidence type="ECO:0000250" key="3">
    <source>
        <dbReference type="UniProtKB" id="P31116"/>
    </source>
</evidence>
<evidence type="ECO:0000255" key="4"/>
<evidence type="ECO:0000255" key="5">
    <source>
        <dbReference type="PROSITE-ProRule" id="PRU01007"/>
    </source>
</evidence>
<evidence type="ECO:0000305" key="6"/>
<reference key="1">
    <citation type="journal article" date="1998" name="Nature">
        <title>Deciphering the biology of Mycobacterium tuberculosis from the complete genome sequence.</title>
        <authorList>
            <person name="Cole S.T."/>
            <person name="Brosch R."/>
            <person name="Parkhill J."/>
            <person name="Garnier T."/>
            <person name="Churcher C.M."/>
            <person name="Harris D.E."/>
            <person name="Gordon S.V."/>
            <person name="Eiglmeier K."/>
            <person name="Gas S."/>
            <person name="Barry C.E. III"/>
            <person name="Tekaia F."/>
            <person name="Badcock K."/>
            <person name="Basham D."/>
            <person name="Brown D."/>
            <person name="Chillingworth T."/>
            <person name="Connor R."/>
            <person name="Davies R.M."/>
            <person name="Devlin K."/>
            <person name="Feltwell T."/>
            <person name="Gentles S."/>
            <person name="Hamlin N."/>
            <person name="Holroyd S."/>
            <person name="Hornsby T."/>
            <person name="Jagels K."/>
            <person name="Krogh A."/>
            <person name="McLean J."/>
            <person name="Moule S."/>
            <person name="Murphy L.D."/>
            <person name="Oliver S."/>
            <person name="Osborne J."/>
            <person name="Quail M.A."/>
            <person name="Rajandream M.A."/>
            <person name="Rogers J."/>
            <person name="Rutter S."/>
            <person name="Seeger K."/>
            <person name="Skelton S."/>
            <person name="Squares S."/>
            <person name="Squares R."/>
            <person name="Sulston J.E."/>
            <person name="Taylor K."/>
            <person name="Whitehead S."/>
            <person name="Barrell B.G."/>
        </authorList>
    </citation>
    <scope>NUCLEOTIDE SEQUENCE [LARGE SCALE GENOMIC DNA]</scope>
    <source>
        <strain>ATCC 25618 / H37Rv</strain>
    </source>
</reference>
<reference key="2">
    <citation type="journal article" date="2008" name="BMC Syst. Biol.">
        <title>targetTB: a target identification pipeline for Mycobacterium tuberculosis through an interactome, reactome and genome-scale structural analysis.</title>
        <authorList>
            <person name="Raman K."/>
            <person name="Yeturu K."/>
            <person name="Chandra N."/>
        </authorList>
    </citation>
    <scope>IDENTIFICATION AS A DRUG TARGET [LARGE SCALE ANALYSIS]</scope>
</reference>
<reference key="3">
    <citation type="journal article" date="2011" name="Mol. Cell. Proteomics">
        <title>Proteogenomic analysis of Mycobacterium tuberculosis by high resolution mass spectrometry.</title>
        <authorList>
            <person name="Kelkar D.S."/>
            <person name="Kumar D."/>
            <person name="Kumar P."/>
            <person name="Balakrishnan L."/>
            <person name="Muthusamy B."/>
            <person name="Yadav A.K."/>
            <person name="Shrivastava P."/>
            <person name="Marimuthu A."/>
            <person name="Anand S."/>
            <person name="Sundaram H."/>
            <person name="Kingsbury R."/>
            <person name="Harsha H.C."/>
            <person name="Nair B."/>
            <person name="Prasad T.S."/>
            <person name="Chauhan D.S."/>
            <person name="Katoch K."/>
            <person name="Katoch V.M."/>
            <person name="Kumar P."/>
            <person name="Chaerkady R."/>
            <person name="Ramachandran S."/>
            <person name="Dash D."/>
            <person name="Pandey A."/>
        </authorList>
    </citation>
    <scope>IDENTIFICATION BY MASS SPECTROMETRY [LARGE SCALE ANALYSIS]</scope>
    <source>
        <strain>ATCC 25618 / H37Rv</strain>
    </source>
</reference>
<accession>P9WPX1</accession>
<accession>L0T681</accession>
<accession>P63629</accession>
<accession>Q10601</accession>
<dbReference type="EC" id="1.1.1.3" evidence="3"/>
<dbReference type="EMBL" id="AL123456">
    <property type="protein sequence ID" value="CCP44051.1"/>
    <property type="molecule type" value="Genomic_DNA"/>
</dbReference>
<dbReference type="PIR" id="B70773">
    <property type="entry name" value="B70773"/>
</dbReference>
<dbReference type="RefSeq" id="NP_215810.1">
    <property type="nucleotide sequence ID" value="NC_000962.3"/>
</dbReference>
<dbReference type="RefSeq" id="WP_003406648.1">
    <property type="nucleotide sequence ID" value="NZ_NVQJ01000030.1"/>
</dbReference>
<dbReference type="SMR" id="P9WPX1"/>
<dbReference type="FunCoup" id="P9WPX1">
    <property type="interactions" value="355"/>
</dbReference>
<dbReference type="STRING" id="83332.Rv1294"/>
<dbReference type="PaxDb" id="83332-Rv1294"/>
<dbReference type="DNASU" id="886962"/>
<dbReference type="GeneID" id="886962"/>
<dbReference type="KEGG" id="mtu:Rv1294"/>
<dbReference type="KEGG" id="mtv:RVBD_1294"/>
<dbReference type="TubercuList" id="Rv1294"/>
<dbReference type="eggNOG" id="COG0460">
    <property type="taxonomic scope" value="Bacteria"/>
</dbReference>
<dbReference type="InParanoid" id="P9WPX1"/>
<dbReference type="OrthoDB" id="9808167at2"/>
<dbReference type="PhylomeDB" id="P9WPX1"/>
<dbReference type="UniPathway" id="UPA00050">
    <property type="reaction ID" value="UER00063"/>
</dbReference>
<dbReference type="UniPathway" id="UPA00051">
    <property type="reaction ID" value="UER00465"/>
</dbReference>
<dbReference type="Proteomes" id="UP000001584">
    <property type="component" value="Chromosome"/>
</dbReference>
<dbReference type="GO" id="GO:0009274">
    <property type="term" value="C:peptidoglycan-based cell wall"/>
    <property type="evidence" value="ECO:0007005"/>
    <property type="project" value="MTBBASE"/>
</dbReference>
<dbReference type="GO" id="GO:0005886">
    <property type="term" value="C:plasma membrane"/>
    <property type="evidence" value="ECO:0007005"/>
    <property type="project" value="MTBBASE"/>
</dbReference>
<dbReference type="GO" id="GO:0004412">
    <property type="term" value="F:homoserine dehydrogenase activity"/>
    <property type="evidence" value="ECO:0000250"/>
    <property type="project" value="UniProtKB"/>
</dbReference>
<dbReference type="GO" id="GO:0046872">
    <property type="term" value="F:metal ion binding"/>
    <property type="evidence" value="ECO:0007669"/>
    <property type="project" value="UniProtKB-KW"/>
</dbReference>
<dbReference type="GO" id="GO:0070403">
    <property type="term" value="F:NAD+ binding"/>
    <property type="evidence" value="ECO:0000250"/>
    <property type="project" value="UniProtKB"/>
</dbReference>
<dbReference type="GO" id="GO:0050661">
    <property type="term" value="F:NADP binding"/>
    <property type="evidence" value="ECO:0007669"/>
    <property type="project" value="InterPro"/>
</dbReference>
<dbReference type="GO" id="GO:0009086">
    <property type="term" value="P:methionine biosynthetic process"/>
    <property type="evidence" value="ECO:0000250"/>
    <property type="project" value="UniProtKB"/>
</dbReference>
<dbReference type="GO" id="GO:0009088">
    <property type="term" value="P:threonine biosynthetic process"/>
    <property type="evidence" value="ECO:0000250"/>
    <property type="project" value="UniProtKB"/>
</dbReference>
<dbReference type="CDD" id="cd04881">
    <property type="entry name" value="ACT_HSDH-Hom"/>
    <property type="match status" value="1"/>
</dbReference>
<dbReference type="FunFam" id="3.30.360.10:FF:000005">
    <property type="entry name" value="Homoserine dehydrogenase"/>
    <property type="match status" value="1"/>
</dbReference>
<dbReference type="FunFam" id="3.40.50.720:FF:000062">
    <property type="entry name" value="Homoserine dehydrogenase"/>
    <property type="match status" value="1"/>
</dbReference>
<dbReference type="Gene3D" id="3.30.70.260">
    <property type="match status" value="1"/>
</dbReference>
<dbReference type="Gene3D" id="3.30.360.10">
    <property type="entry name" value="Dihydrodipicolinate Reductase, domain 2"/>
    <property type="match status" value="1"/>
</dbReference>
<dbReference type="Gene3D" id="3.40.50.720">
    <property type="entry name" value="NAD(P)-binding Rossmann-like Domain"/>
    <property type="match status" value="1"/>
</dbReference>
<dbReference type="InterPro" id="IPR045865">
    <property type="entry name" value="ACT-like_dom_sf"/>
</dbReference>
<dbReference type="InterPro" id="IPR002912">
    <property type="entry name" value="ACT_dom"/>
</dbReference>
<dbReference type="InterPro" id="IPR005106">
    <property type="entry name" value="Asp/hSer_DH_NAD-bd"/>
</dbReference>
<dbReference type="InterPro" id="IPR016204">
    <property type="entry name" value="HDH"/>
</dbReference>
<dbReference type="InterPro" id="IPR001342">
    <property type="entry name" value="HDH_cat"/>
</dbReference>
<dbReference type="InterPro" id="IPR019811">
    <property type="entry name" value="HDH_CS"/>
</dbReference>
<dbReference type="InterPro" id="IPR036291">
    <property type="entry name" value="NAD(P)-bd_dom_sf"/>
</dbReference>
<dbReference type="NCBIfam" id="NF004976">
    <property type="entry name" value="PRK06349.1"/>
    <property type="match status" value="1"/>
</dbReference>
<dbReference type="PANTHER" id="PTHR43331">
    <property type="entry name" value="HOMOSERINE DEHYDROGENASE"/>
    <property type="match status" value="1"/>
</dbReference>
<dbReference type="PANTHER" id="PTHR43331:SF1">
    <property type="entry name" value="HOMOSERINE DEHYDROGENASE"/>
    <property type="match status" value="1"/>
</dbReference>
<dbReference type="Pfam" id="PF01842">
    <property type="entry name" value="ACT"/>
    <property type="match status" value="1"/>
</dbReference>
<dbReference type="Pfam" id="PF00742">
    <property type="entry name" value="Homoserine_dh"/>
    <property type="match status" value="1"/>
</dbReference>
<dbReference type="Pfam" id="PF03447">
    <property type="entry name" value="NAD_binding_3"/>
    <property type="match status" value="1"/>
</dbReference>
<dbReference type="PIRSF" id="PIRSF000098">
    <property type="entry name" value="Homoser_dehydrog"/>
    <property type="match status" value="1"/>
</dbReference>
<dbReference type="SUPFAM" id="SSF55021">
    <property type="entry name" value="ACT-like"/>
    <property type="match status" value="1"/>
</dbReference>
<dbReference type="SUPFAM" id="SSF55347">
    <property type="entry name" value="Glyceraldehyde-3-phosphate dehydrogenase-like, C-terminal domain"/>
    <property type="match status" value="1"/>
</dbReference>
<dbReference type="SUPFAM" id="SSF51735">
    <property type="entry name" value="NAD(P)-binding Rossmann-fold domains"/>
    <property type="match status" value="1"/>
</dbReference>
<dbReference type="PROSITE" id="PS51671">
    <property type="entry name" value="ACT"/>
    <property type="match status" value="1"/>
</dbReference>
<dbReference type="PROSITE" id="PS01042">
    <property type="entry name" value="HOMOSER_DHGENASE"/>
    <property type="match status" value="1"/>
</dbReference>
<protein>
    <recommendedName>
        <fullName>Homoserine dehydrogenase</fullName>
        <shortName>HDH</shortName>
        <shortName>HSD</shortName>
        <ecNumber evidence="3">1.1.1.3</ecNumber>
    </recommendedName>
</protein>
<organism>
    <name type="scientific">Mycobacterium tuberculosis (strain ATCC 25618 / H37Rv)</name>
    <dbReference type="NCBI Taxonomy" id="83332"/>
    <lineage>
        <taxon>Bacteria</taxon>
        <taxon>Bacillati</taxon>
        <taxon>Actinomycetota</taxon>
        <taxon>Actinomycetes</taxon>
        <taxon>Mycobacteriales</taxon>
        <taxon>Mycobacteriaceae</taxon>
        <taxon>Mycobacterium</taxon>
        <taxon>Mycobacterium tuberculosis complex</taxon>
    </lineage>
</organism>
<name>DHOM_MYCTU</name>
<keyword id="KW-0028">Amino-acid biosynthesis</keyword>
<keyword id="KW-0479">Metal-binding</keyword>
<keyword id="KW-0486">Methionine biosynthesis</keyword>
<keyword id="KW-0520">NAD</keyword>
<keyword id="KW-0521">NADP</keyword>
<keyword id="KW-0560">Oxidoreductase</keyword>
<keyword id="KW-1185">Reference proteome</keyword>
<keyword id="KW-0915">Sodium</keyword>
<keyword id="KW-0791">Threonine biosynthesis</keyword>
<comment type="function">
    <text evidence="3">Catalyzes the conversion of L-aspartate-beta-semialdehyde (L-Asa) to L-homoserine (L-Hse), the third step in the biosynthesis of threonine and methionine from aspartate.</text>
</comment>
<comment type="catalytic activity">
    <reaction evidence="3">
        <text>L-homoserine + NADP(+) = L-aspartate 4-semialdehyde + NADPH + H(+)</text>
        <dbReference type="Rhea" id="RHEA:15761"/>
        <dbReference type="ChEBI" id="CHEBI:15378"/>
        <dbReference type="ChEBI" id="CHEBI:57476"/>
        <dbReference type="ChEBI" id="CHEBI:57783"/>
        <dbReference type="ChEBI" id="CHEBI:58349"/>
        <dbReference type="ChEBI" id="CHEBI:537519"/>
        <dbReference type="EC" id="1.1.1.3"/>
    </reaction>
    <physiologicalReaction direction="right-to-left" evidence="3">
        <dbReference type="Rhea" id="RHEA:15763"/>
    </physiologicalReaction>
</comment>
<comment type="catalytic activity">
    <reaction evidence="3">
        <text>L-homoserine + NAD(+) = L-aspartate 4-semialdehyde + NADH + H(+)</text>
        <dbReference type="Rhea" id="RHEA:15757"/>
        <dbReference type="ChEBI" id="CHEBI:15378"/>
        <dbReference type="ChEBI" id="CHEBI:57476"/>
        <dbReference type="ChEBI" id="CHEBI:57540"/>
        <dbReference type="ChEBI" id="CHEBI:57945"/>
        <dbReference type="ChEBI" id="CHEBI:537519"/>
        <dbReference type="EC" id="1.1.1.3"/>
    </reaction>
    <physiologicalReaction direction="right-to-left" evidence="3">
        <dbReference type="Rhea" id="RHEA:15759"/>
    </physiologicalReaction>
</comment>
<comment type="cofactor">
    <cofactor evidence="3">
        <name>a metal cation</name>
        <dbReference type="ChEBI" id="CHEBI:25213"/>
    </cofactor>
    <text evidence="3">A sodium ion is seen in the structure; a metal ion may subtly affect the relative position of the nucleotide-binding region to influence enzyme activity, and could increase the stability of the enzyme.</text>
</comment>
<comment type="pathway">
    <text evidence="3">Amino-acid biosynthesis; L-methionine biosynthesis via de novo pathway; L-homoserine from L-aspartate: step 3/3.</text>
</comment>
<comment type="pathway">
    <text evidence="3">Amino-acid biosynthesis; L-threonine biosynthesis; L-threonine from L-aspartate: step 3/5.</text>
</comment>
<comment type="miscellaneous">
    <text>Was identified as a high-confidence drug target.</text>
</comment>
<comment type="similarity">
    <text evidence="6">Belongs to the homoserine dehydrogenase family.</text>
</comment>